<feature type="chain" id="PRO_0000387633" description="Acetaldehyde dehydrogenase">
    <location>
        <begin position="1"/>
        <end position="314"/>
    </location>
</feature>
<feature type="active site" description="Acyl-thioester intermediate" evidence="1">
    <location>
        <position position="133"/>
    </location>
</feature>
<feature type="binding site" evidence="1">
    <location>
        <begin position="15"/>
        <end position="18"/>
    </location>
    <ligand>
        <name>NAD(+)</name>
        <dbReference type="ChEBI" id="CHEBI:57540"/>
    </ligand>
</feature>
<feature type="binding site" evidence="1">
    <location>
        <begin position="164"/>
        <end position="172"/>
    </location>
    <ligand>
        <name>NAD(+)</name>
        <dbReference type="ChEBI" id="CHEBI:57540"/>
    </ligand>
</feature>
<feature type="binding site" evidence="1">
    <location>
        <position position="292"/>
    </location>
    <ligand>
        <name>NAD(+)</name>
        <dbReference type="ChEBI" id="CHEBI:57540"/>
    </ligand>
</feature>
<proteinExistence type="inferred from homology"/>
<dbReference type="EC" id="1.2.1.10" evidence="1"/>
<dbReference type="EMBL" id="CP001052">
    <property type="protein sequence ID" value="ACD15882.1"/>
    <property type="molecule type" value="Genomic_DNA"/>
</dbReference>
<dbReference type="RefSeq" id="WP_012432496.1">
    <property type="nucleotide sequence ID" value="NC_010681.1"/>
</dbReference>
<dbReference type="SMR" id="B2T2S1"/>
<dbReference type="STRING" id="398527.Bphyt_1467"/>
<dbReference type="KEGG" id="bpy:Bphyt_1467"/>
<dbReference type="eggNOG" id="COG4569">
    <property type="taxonomic scope" value="Bacteria"/>
</dbReference>
<dbReference type="HOGENOM" id="CLU_062208_0_0_4"/>
<dbReference type="OrthoDB" id="9786743at2"/>
<dbReference type="Proteomes" id="UP000001739">
    <property type="component" value="Chromosome 1"/>
</dbReference>
<dbReference type="GO" id="GO:0008774">
    <property type="term" value="F:acetaldehyde dehydrogenase (acetylating) activity"/>
    <property type="evidence" value="ECO:0007669"/>
    <property type="project" value="UniProtKB-UniRule"/>
</dbReference>
<dbReference type="GO" id="GO:0051287">
    <property type="term" value="F:NAD binding"/>
    <property type="evidence" value="ECO:0007669"/>
    <property type="project" value="UniProtKB-UniRule"/>
</dbReference>
<dbReference type="GO" id="GO:0009056">
    <property type="term" value="P:catabolic process"/>
    <property type="evidence" value="ECO:0007669"/>
    <property type="project" value="UniProtKB-KW"/>
</dbReference>
<dbReference type="CDD" id="cd23933">
    <property type="entry name" value="ALDH_C"/>
    <property type="match status" value="1"/>
</dbReference>
<dbReference type="Gene3D" id="3.30.360.10">
    <property type="entry name" value="Dihydrodipicolinate Reductase, domain 2"/>
    <property type="match status" value="1"/>
</dbReference>
<dbReference type="Gene3D" id="3.40.50.720">
    <property type="entry name" value="NAD(P)-binding Rossmann-like Domain"/>
    <property type="match status" value="1"/>
</dbReference>
<dbReference type="HAMAP" id="MF_01657">
    <property type="entry name" value="Ac_ald_DH_ac"/>
    <property type="match status" value="1"/>
</dbReference>
<dbReference type="InterPro" id="IPR003361">
    <property type="entry name" value="Acetaldehyde_dehydrogenase"/>
</dbReference>
<dbReference type="InterPro" id="IPR015426">
    <property type="entry name" value="Acetylaldehyde_DH_C"/>
</dbReference>
<dbReference type="InterPro" id="IPR036291">
    <property type="entry name" value="NAD(P)-bd_dom_sf"/>
</dbReference>
<dbReference type="InterPro" id="IPR000534">
    <property type="entry name" value="Semialdehyde_DH_NAD-bd"/>
</dbReference>
<dbReference type="NCBIfam" id="TIGR03215">
    <property type="entry name" value="ac_ald_DH_ac"/>
    <property type="match status" value="1"/>
</dbReference>
<dbReference type="NCBIfam" id="NF006157">
    <property type="entry name" value="PRK08300.1"/>
    <property type="match status" value="1"/>
</dbReference>
<dbReference type="Pfam" id="PF09290">
    <property type="entry name" value="AcetDehyd-dimer"/>
    <property type="match status" value="1"/>
</dbReference>
<dbReference type="Pfam" id="PF01118">
    <property type="entry name" value="Semialdhyde_dh"/>
    <property type="match status" value="1"/>
</dbReference>
<dbReference type="PIRSF" id="PIRSF015689">
    <property type="entry name" value="Actaldh_dh_actl"/>
    <property type="match status" value="1"/>
</dbReference>
<dbReference type="SMART" id="SM00859">
    <property type="entry name" value="Semialdhyde_dh"/>
    <property type="match status" value="1"/>
</dbReference>
<dbReference type="SUPFAM" id="SSF55347">
    <property type="entry name" value="Glyceraldehyde-3-phosphate dehydrogenase-like, C-terminal domain"/>
    <property type="match status" value="1"/>
</dbReference>
<dbReference type="SUPFAM" id="SSF51735">
    <property type="entry name" value="NAD(P)-binding Rossmann-fold domains"/>
    <property type="match status" value="1"/>
</dbReference>
<reference key="1">
    <citation type="journal article" date="2011" name="J. Bacteriol.">
        <title>Complete genome sequence of the plant growth-promoting endophyte Burkholderia phytofirmans strain PsJN.</title>
        <authorList>
            <person name="Weilharter A."/>
            <person name="Mitter B."/>
            <person name="Shin M.V."/>
            <person name="Chain P.S."/>
            <person name="Nowak J."/>
            <person name="Sessitsch A."/>
        </authorList>
    </citation>
    <scope>NUCLEOTIDE SEQUENCE [LARGE SCALE GENOMIC DNA]</scope>
    <source>
        <strain>DSM 17436 / LMG 22146 / PsJN</strain>
    </source>
</reference>
<protein>
    <recommendedName>
        <fullName evidence="1">Acetaldehyde dehydrogenase</fullName>
        <ecNumber evidence="1">1.2.1.10</ecNumber>
    </recommendedName>
    <alternativeName>
        <fullName evidence="1">Acetaldehyde dehydrogenase [acetylating]</fullName>
    </alternativeName>
</protein>
<gene>
    <name type="ordered locus">Bphyt_1467</name>
</gene>
<organism>
    <name type="scientific">Paraburkholderia phytofirmans (strain DSM 17436 / LMG 22146 / PsJN)</name>
    <name type="common">Burkholderia phytofirmans</name>
    <dbReference type="NCBI Taxonomy" id="398527"/>
    <lineage>
        <taxon>Bacteria</taxon>
        <taxon>Pseudomonadati</taxon>
        <taxon>Pseudomonadota</taxon>
        <taxon>Betaproteobacteria</taxon>
        <taxon>Burkholderiales</taxon>
        <taxon>Burkholderiaceae</taxon>
        <taxon>Paraburkholderia</taxon>
    </lineage>
</organism>
<keyword id="KW-0058">Aromatic hydrocarbons catabolism</keyword>
<keyword id="KW-0520">NAD</keyword>
<keyword id="KW-0560">Oxidoreductase</keyword>
<evidence type="ECO:0000255" key="1">
    <source>
        <dbReference type="HAMAP-Rule" id="MF_01657"/>
    </source>
</evidence>
<name>ACDH_PARPJ</name>
<sequence>MYDKQDKQAVAIIGSGNIGTDLMIKVLRDAKHLEMGAMVGIDPASDGLARAKRLGVATTAHGIEGLVTMPNFGAIRIAFDATSAGAHHRHAAVLREHGVTVIDLTPAAIGPFVVPVVNLFAHLDAPNLNMVTCGGQATIPIVHAVSRVAPVRYAEIVASIASRSAGPGTRANIDEFTETTSKAIETVGGAARGKAIIVLNPAEPPLMMRDTVYCLTEEEADTDEIESSIRAMVSAVASYVPGYRLKQAVQFDRYTAANPLALHANERRAGLKVSVFLEVEGAAHYLPSYAGNLDIMTSAALAAAEQIAASRVAA</sequence>
<accession>B2T2S1</accession>
<comment type="catalytic activity">
    <reaction evidence="1">
        <text>acetaldehyde + NAD(+) + CoA = acetyl-CoA + NADH + H(+)</text>
        <dbReference type="Rhea" id="RHEA:23288"/>
        <dbReference type="ChEBI" id="CHEBI:15343"/>
        <dbReference type="ChEBI" id="CHEBI:15378"/>
        <dbReference type="ChEBI" id="CHEBI:57287"/>
        <dbReference type="ChEBI" id="CHEBI:57288"/>
        <dbReference type="ChEBI" id="CHEBI:57540"/>
        <dbReference type="ChEBI" id="CHEBI:57945"/>
        <dbReference type="EC" id="1.2.1.10"/>
    </reaction>
</comment>
<comment type="similarity">
    <text evidence="1">Belongs to the acetaldehyde dehydrogenase family.</text>
</comment>